<keyword id="KW-0067">ATP-binding</keyword>
<keyword id="KW-0418">Kinase</keyword>
<keyword id="KW-0460">Magnesium</keyword>
<keyword id="KW-0479">Metal-binding</keyword>
<keyword id="KW-0547">Nucleotide-binding</keyword>
<keyword id="KW-1185">Reference proteome</keyword>
<keyword id="KW-0784">Thiamine biosynthesis</keyword>
<keyword id="KW-0808">Transferase</keyword>
<comment type="function">
    <text evidence="1">Catalyzes the phosphorylation of the hydroxyl group of 4-methyl-5-beta-hydroxyethylthiazole (THZ).</text>
</comment>
<comment type="catalytic activity">
    <reaction evidence="1">
        <text>5-(2-hydroxyethyl)-4-methylthiazole + ATP = 4-methyl-5-(2-phosphooxyethyl)-thiazole + ADP + H(+)</text>
        <dbReference type="Rhea" id="RHEA:24212"/>
        <dbReference type="ChEBI" id="CHEBI:15378"/>
        <dbReference type="ChEBI" id="CHEBI:17957"/>
        <dbReference type="ChEBI" id="CHEBI:30616"/>
        <dbReference type="ChEBI" id="CHEBI:58296"/>
        <dbReference type="ChEBI" id="CHEBI:456216"/>
        <dbReference type="EC" id="2.7.1.50"/>
    </reaction>
</comment>
<comment type="cofactor">
    <cofactor evidence="1">
        <name>Mg(2+)</name>
        <dbReference type="ChEBI" id="CHEBI:18420"/>
    </cofactor>
</comment>
<comment type="pathway">
    <text evidence="1">Cofactor biosynthesis; thiamine diphosphate biosynthesis; 4-methyl-5-(2-phosphoethyl)-thiazole from 5-(2-hydroxyethyl)-4-methylthiazole: step 1/1.</text>
</comment>
<comment type="similarity">
    <text evidence="1">Belongs to the Thz kinase family.</text>
</comment>
<evidence type="ECO:0000255" key="1">
    <source>
        <dbReference type="HAMAP-Rule" id="MF_00228"/>
    </source>
</evidence>
<proteinExistence type="inferred from homology"/>
<reference key="1">
    <citation type="journal article" date="1997" name="J. Bacteriol.">
        <title>Identification and characterization of an operon in Salmonella typhimurium involved in thiamine biosynthesis.</title>
        <authorList>
            <person name="Petersen L.A."/>
            <person name="Downs D.M."/>
        </authorList>
    </citation>
    <scope>NUCLEOTIDE SEQUENCE [GENOMIC DNA]</scope>
    <source>
        <strain>LT2</strain>
    </source>
</reference>
<reference key="2">
    <citation type="journal article" date="2001" name="Nature">
        <title>Complete genome sequence of Salmonella enterica serovar Typhimurium LT2.</title>
        <authorList>
            <person name="McClelland M."/>
            <person name="Sanderson K.E."/>
            <person name="Spieth J."/>
            <person name="Clifton S.W."/>
            <person name="Latreille P."/>
            <person name="Courtney L."/>
            <person name="Porwollik S."/>
            <person name="Ali J."/>
            <person name="Dante M."/>
            <person name="Du F."/>
            <person name="Hou S."/>
            <person name="Layman D."/>
            <person name="Leonard S."/>
            <person name="Nguyen C."/>
            <person name="Scott K."/>
            <person name="Holmes A."/>
            <person name="Grewal N."/>
            <person name="Mulvaney E."/>
            <person name="Ryan E."/>
            <person name="Sun H."/>
            <person name="Florea L."/>
            <person name="Miller W."/>
            <person name="Stoneking T."/>
            <person name="Nhan M."/>
            <person name="Waterston R."/>
            <person name="Wilson R.K."/>
        </authorList>
    </citation>
    <scope>NUCLEOTIDE SEQUENCE [LARGE SCALE GENOMIC DNA]</scope>
    <source>
        <strain>LT2 / SGSC1412 / ATCC 700720</strain>
    </source>
</reference>
<gene>
    <name evidence="1" type="primary">thiM</name>
    <name type="ordered locus">STM2147</name>
</gene>
<accession>P55883</accession>
<organism>
    <name type="scientific">Salmonella typhimurium (strain LT2 / SGSC1412 / ATCC 700720)</name>
    <dbReference type="NCBI Taxonomy" id="99287"/>
    <lineage>
        <taxon>Bacteria</taxon>
        <taxon>Pseudomonadati</taxon>
        <taxon>Pseudomonadota</taxon>
        <taxon>Gammaproteobacteria</taxon>
        <taxon>Enterobacterales</taxon>
        <taxon>Enterobacteriaceae</taxon>
        <taxon>Salmonella</taxon>
    </lineage>
</organism>
<feature type="chain" id="PRO_0000156950" description="Hydroxyethylthiazole kinase">
    <location>
        <begin position="1"/>
        <end position="265"/>
    </location>
</feature>
<feature type="binding site" evidence="1">
    <location>
        <position position="50"/>
    </location>
    <ligand>
        <name>substrate</name>
    </ligand>
</feature>
<feature type="binding site" evidence="1">
    <location>
        <position position="125"/>
    </location>
    <ligand>
        <name>ATP</name>
        <dbReference type="ChEBI" id="CHEBI:30616"/>
    </ligand>
</feature>
<feature type="binding site" evidence="1">
    <location>
        <position position="171"/>
    </location>
    <ligand>
        <name>ATP</name>
        <dbReference type="ChEBI" id="CHEBI:30616"/>
    </ligand>
</feature>
<feature type="binding site" evidence="1">
    <location>
        <position position="198"/>
    </location>
    <ligand>
        <name>substrate</name>
    </ligand>
</feature>
<dbReference type="EC" id="2.7.1.50" evidence="1"/>
<dbReference type="EMBL" id="U87940">
    <property type="protein sequence ID" value="AAB66491.1"/>
    <property type="molecule type" value="Genomic_DNA"/>
</dbReference>
<dbReference type="EMBL" id="AE006468">
    <property type="protein sequence ID" value="AAL21050.1"/>
    <property type="molecule type" value="Genomic_DNA"/>
</dbReference>
<dbReference type="RefSeq" id="NP_461091.1">
    <property type="nucleotide sequence ID" value="NC_003197.2"/>
</dbReference>
<dbReference type="RefSeq" id="WP_001182156.1">
    <property type="nucleotide sequence ID" value="NC_003197.2"/>
</dbReference>
<dbReference type="SMR" id="P55883"/>
<dbReference type="STRING" id="99287.STM2147"/>
<dbReference type="PaxDb" id="99287-STM2147"/>
<dbReference type="GeneID" id="1253668"/>
<dbReference type="KEGG" id="stm:STM2147"/>
<dbReference type="PATRIC" id="fig|99287.12.peg.2272"/>
<dbReference type="HOGENOM" id="CLU_019943_0_1_6"/>
<dbReference type="OMA" id="KRPLVHN"/>
<dbReference type="PhylomeDB" id="P55883"/>
<dbReference type="BioCyc" id="SENT99287:STM2147-MONOMER"/>
<dbReference type="UniPathway" id="UPA00060">
    <property type="reaction ID" value="UER00139"/>
</dbReference>
<dbReference type="Proteomes" id="UP000001014">
    <property type="component" value="Chromosome"/>
</dbReference>
<dbReference type="GO" id="GO:0005524">
    <property type="term" value="F:ATP binding"/>
    <property type="evidence" value="ECO:0007669"/>
    <property type="project" value="UniProtKB-UniRule"/>
</dbReference>
<dbReference type="GO" id="GO:0004417">
    <property type="term" value="F:hydroxyethylthiazole kinase activity"/>
    <property type="evidence" value="ECO:0007669"/>
    <property type="project" value="UniProtKB-UniRule"/>
</dbReference>
<dbReference type="GO" id="GO:0000287">
    <property type="term" value="F:magnesium ion binding"/>
    <property type="evidence" value="ECO:0007669"/>
    <property type="project" value="UniProtKB-UniRule"/>
</dbReference>
<dbReference type="GO" id="GO:0009228">
    <property type="term" value="P:thiamine biosynthetic process"/>
    <property type="evidence" value="ECO:0007669"/>
    <property type="project" value="UniProtKB-KW"/>
</dbReference>
<dbReference type="GO" id="GO:0009229">
    <property type="term" value="P:thiamine diphosphate biosynthetic process"/>
    <property type="evidence" value="ECO:0007669"/>
    <property type="project" value="UniProtKB-UniRule"/>
</dbReference>
<dbReference type="CDD" id="cd01170">
    <property type="entry name" value="THZ_kinase"/>
    <property type="match status" value="1"/>
</dbReference>
<dbReference type="FunFam" id="3.40.1190.20:FF:000015">
    <property type="entry name" value="Hydroxyethylthiazole kinase"/>
    <property type="match status" value="1"/>
</dbReference>
<dbReference type="Gene3D" id="3.40.1190.20">
    <property type="match status" value="1"/>
</dbReference>
<dbReference type="HAMAP" id="MF_00228">
    <property type="entry name" value="Thz_kinase"/>
    <property type="match status" value="1"/>
</dbReference>
<dbReference type="InterPro" id="IPR000417">
    <property type="entry name" value="Hyethyz_kinase"/>
</dbReference>
<dbReference type="InterPro" id="IPR029056">
    <property type="entry name" value="Ribokinase-like"/>
</dbReference>
<dbReference type="NCBIfam" id="NF006830">
    <property type="entry name" value="PRK09355.1"/>
    <property type="match status" value="1"/>
</dbReference>
<dbReference type="NCBIfam" id="TIGR00694">
    <property type="entry name" value="thiM"/>
    <property type="match status" value="1"/>
</dbReference>
<dbReference type="Pfam" id="PF02110">
    <property type="entry name" value="HK"/>
    <property type="match status" value="1"/>
</dbReference>
<dbReference type="PIRSF" id="PIRSF000513">
    <property type="entry name" value="Thz_kinase"/>
    <property type="match status" value="1"/>
</dbReference>
<dbReference type="PRINTS" id="PR01099">
    <property type="entry name" value="HYETHTZKNASE"/>
</dbReference>
<dbReference type="SUPFAM" id="SSF53613">
    <property type="entry name" value="Ribokinase-like"/>
    <property type="match status" value="1"/>
</dbReference>
<protein>
    <recommendedName>
        <fullName evidence="1">Hydroxyethylthiazole kinase</fullName>
        <ecNumber evidence="1">2.7.1.50</ecNumber>
    </recommendedName>
    <alternativeName>
        <fullName evidence="1">4-methyl-5-beta-hydroxyethylthiazole kinase</fullName>
        <shortName evidence="1">TH kinase</shortName>
        <shortName evidence="1">Thz kinase</shortName>
    </alternativeName>
</protein>
<name>THIM_SALTY</name>
<sequence length="265" mass="27422">MQPDLHCRTLAAHTLKHFRALSPLTHCMTNDVVQTFTANTLLALGASPAMVIDPVEARPFAAIANALLINVGTLTASRADAMRAAVESAYDAKTPWTLDPVAVGALEFRRRFCLDLLSLRPAAIRGNASEILALSGMALGGRGVDTTEAALAALPAAQALARQIDCIVVVTGEIDYVTNGQRTLSIPGGDPLMTRIVGTGCALSAVVAASCALPGAALDNVASACCWMKLAGQAAAERSEGPGSFIPAFLDALYHLDVEAANATN</sequence>